<proteinExistence type="evidence at protein level"/>
<comment type="interaction">
    <interactant intactId="EBI-1104653">
        <id>Q14094</id>
    </interactant>
    <interactant intactId="EBI-1245761">
        <id>Q00526</id>
        <label>CDK3</label>
    </interactant>
    <organismsDiffer>false</organismsDiffer>
    <experiments>3</experiments>
</comment>
<comment type="interaction">
    <interactant intactId="EBI-1104653">
        <id>Q14094</id>
    </interactant>
    <interactant intactId="EBI-1041567">
        <id>Q00535</id>
        <label>CDK5</label>
    </interactant>
    <organismsDiffer>false</organismsDiffer>
    <experiments>6</experiments>
</comment>
<comment type="interaction">
    <interactant intactId="EBI-1104653">
        <id>Q14094</id>
    </interactant>
    <interactant intactId="EBI-295663">
        <id>Q00534</id>
        <label>CDK6</label>
    </interactant>
    <organismsDiffer>false</organismsDiffer>
    <experiments>3</experiments>
</comment>
<comment type="interaction">
    <interactant intactId="EBI-1104653">
        <id>Q14094</id>
    </interactant>
    <interactant intactId="EBI-746595">
        <id>Q96E35</id>
        <label>ZMYND19</label>
    </interactant>
    <organismsDiffer>false</organismsDiffer>
    <experiments>3</experiments>
</comment>
<comment type="subcellular location">
    <subcellularLocation>
        <location evidence="2">Nucleus membrane</location>
    </subcellularLocation>
</comment>
<comment type="alternative products">
    <event type="alternative splicing"/>
    <isoform>
        <id>Q14094-1</id>
        <name>1</name>
        <sequence type="displayed"/>
    </isoform>
    <isoform>
        <id>Q14094-2</id>
        <name>2</name>
        <sequence type="described" ref="VSP_056682"/>
    </isoform>
</comment>
<comment type="tissue specificity">
    <text evidence="3">Highest levels in adult heart, brain and skeletal muscle. Lower levels in adult placenta, lung, kidney and pancreas. Also high levels in fetal brain and lower levels in fetal lung, liver and kidney. Also abundant in testis and thyroid.</text>
</comment>
<comment type="developmental stage">
    <text evidence="3">Expression is independent of the cell cycle in lung fibroblasts.</text>
</comment>
<comment type="similarity">
    <text evidence="6">Belongs to the cyclin family.</text>
</comment>
<protein>
    <recommendedName>
        <fullName evidence="6">Cyclin-I</fullName>
    </recommendedName>
</protein>
<sequence>MKFPGPLENQRLSFLLEKAITREAQMWKVNVRKMPSNQNVSPSQRDEVIQWLAKLKYQFNLYPETFALASSLLDRFLATVKAHPKYLSCIAISCFFLAAKTVEEDERIPVLKVLARDSFCGCSSSEILRMERIILDKLNWDLHTATPLDFLHIFHAIAVSTRPQLLFSLPKLSPSQHLAVLTKQLLHCMACNQLLQFRGSMLALAMVSLEMEKLIPDWLSLTIELLQKAQMDSSQLIHCRELVAHHLSTLQSSLPLNSVYVYRPLKHTLVTCDKGVFRLHPSSVPGPDFSKDNSKPEVPVRGTAAFYHHLPAASGCKQTSTKRKVEEMEVDDFYDGIKRLYNEDNVSENVGSVCGTDLSRQEGHASPCPPLQPVSVM</sequence>
<reference key="1">
    <citation type="journal article" date="1995" name="Exp. Cell Res.">
        <title>Cyclin I: a new cyclin encoded by a gene isolated from human brain.</title>
        <authorList>
            <person name="Nakamura T."/>
            <person name="Sanokawa R."/>
            <person name="Sasaki Y.F."/>
            <person name="Ayusawa D."/>
            <person name="Oishi M."/>
            <person name="Mori N."/>
        </authorList>
    </citation>
    <scope>NUCLEOTIDE SEQUENCE [MRNA] (ISOFORM 1)</scope>
    <scope>TISSUE SPECIFICITY</scope>
    <scope>DEVELOPMENTAL STAGE</scope>
    <source>
        <tissue>Forebrain cortex</tissue>
    </source>
</reference>
<reference key="2">
    <citation type="submission" date="1999-03" db="EMBL/GenBank/DDBJ databases">
        <title>Isolating a new cDNA coding for human cyclin protein.</title>
        <authorList>
            <person name="Chen J.H."/>
            <person name="Luo W.Q."/>
            <person name="Zhou Y."/>
            <person name="Zhou H.J."/>
            <person name="Huang X.W."/>
            <person name="Yuan J.G."/>
            <person name="Qiang B.Q."/>
        </authorList>
    </citation>
    <scope>NUCLEOTIDE SEQUENCE [MRNA] (ISOFORM 1)</scope>
</reference>
<reference key="3">
    <citation type="submission" date="2003-05" db="EMBL/GenBank/DDBJ databases">
        <title>Cloning of human full-length CDSs in BD Creator(TM) system donor vector.</title>
        <authorList>
            <person name="Kalnine N."/>
            <person name="Chen X."/>
            <person name="Rolfs A."/>
            <person name="Halleck A."/>
            <person name="Hines L."/>
            <person name="Eisenstein S."/>
            <person name="Koundinya M."/>
            <person name="Raphael J."/>
            <person name="Moreira D."/>
            <person name="Kelley T."/>
            <person name="LaBaer J."/>
            <person name="Lin Y."/>
            <person name="Phelan M."/>
            <person name="Farmer A."/>
        </authorList>
    </citation>
    <scope>NUCLEOTIDE SEQUENCE [LARGE SCALE MRNA] (ISOFORM 1)</scope>
</reference>
<reference key="4">
    <citation type="submission" date="2002-12" db="EMBL/GenBank/DDBJ databases">
        <authorList>
            <consortium name="NIEHS SNPs program"/>
        </authorList>
    </citation>
    <scope>NUCLEOTIDE SEQUENCE [GENOMIC DNA]</scope>
    <scope>VARIANT ILE-207</scope>
</reference>
<reference key="5">
    <citation type="journal article" date="2004" name="Nat. Genet.">
        <title>Complete sequencing and characterization of 21,243 full-length human cDNAs.</title>
        <authorList>
            <person name="Ota T."/>
            <person name="Suzuki Y."/>
            <person name="Nishikawa T."/>
            <person name="Otsuki T."/>
            <person name="Sugiyama T."/>
            <person name="Irie R."/>
            <person name="Wakamatsu A."/>
            <person name="Hayashi K."/>
            <person name="Sato H."/>
            <person name="Nagai K."/>
            <person name="Kimura K."/>
            <person name="Makita H."/>
            <person name="Sekine M."/>
            <person name="Obayashi M."/>
            <person name="Nishi T."/>
            <person name="Shibahara T."/>
            <person name="Tanaka T."/>
            <person name="Ishii S."/>
            <person name="Yamamoto J."/>
            <person name="Saito K."/>
            <person name="Kawai Y."/>
            <person name="Isono Y."/>
            <person name="Nakamura Y."/>
            <person name="Nagahari K."/>
            <person name="Murakami K."/>
            <person name="Yasuda T."/>
            <person name="Iwayanagi T."/>
            <person name="Wagatsuma M."/>
            <person name="Shiratori A."/>
            <person name="Sudo H."/>
            <person name="Hosoiri T."/>
            <person name="Kaku Y."/>
            <person name="Kodaira H."/>
            <person name="Kondo H."/>
            <person name="Sugawara M."/>
            <person name="Takahashi M."/>
            <person name="Kanda K."/>
            <person name="Yokoi T."/>
            <person name="Furuya T."/>
            <person name="Kikkawa E."/>
            <person name="Omura Y."/>
            <person name="Abe K."/>
            <person name="Kamihara K."/>
            <person name="Katsuta N."/>
            <person name="Sato K."/>
            <person name="Tanikawa M."/>
            <person name="Yamazaki M."/>
            <person name="Ninomiya K."/>
            <person name="Ishibashi T."/>
            <person name="Yamashita H."/>
            <person name="Murakawa K."/>
            <person name="Fujimori K."/>
            <person name="Tanai H."/>
            <person name="Kimata M."/>
            <person name="Watanabe M."/>
            <person name="Hiraoka S."/>
            <person name="Chiba Y."/>
            <person name="Ishida S."/>
            <person name="Ono Y."/>
            <person name="Takiguchi S."/>
            <person name="Watanabe S."/>
            <person name="Yosida M."/>
            <person name="Hotuta T."/>
            <person name="Kusano J."/>
            <person name="Kanehori K."/>
            <person name="Takahashi-Fujii A."/>
            <person name="Hara H."/>
            <person name="Tanase T.-O."/>
            <person name="Nomura Y."/>
            <person name="Togiya S."/>
            <person name="Komai F."/>
            <person name="Hara R."/>
            <person name="Takeuchi K."/>
            <person name="Arita M."/>
            <person name="Imose N."/>
            <person name="Musashino K."/>
            <person name="Yuuki H."/>
            <person name="Oshima A."/>
            <person name="Sasaki N."/>
            <person name="Aotsuka S."/>
            <person name="Yoshikawa Y."/>
            <person name="Matsunawa H."/>
            <person name="Ichihara T."/>
            <person name="Shiohata N."/>
            <person name="Sano S."/>
            <person name="Moriya S."/>
            <person name="Momiyama H."/>
            <person name="Satoh N."/>
            <person name="Takami S."/>
            <person name="Terashima Y."/>
            <person name="Suzuki O."/>
            <person name="Nakagawa S."/>
            <person name="Senoh A."/>
            <person name="Mizoguchi H."/>
            <person name="Goto Y."/>
            <person name="Shimizu F."/>
            <person name="Wakebe H."/>
            <person name="Hishigaki H."/>
            <person name="Watanabe T."/>
            <person name="Sugiyama A."/>
            <person name="Takemoto M."/>
            <person name="Kawakami B."/>
            <person name="Yamazaki M."/>
            <person name="Watanabe K."/>
            <person name="Kumagai A."/>
            <person name="Itakura S."/>
            <person name="Fukuzumi Y."/>
            <person name="Fujimori Y."/>
            <person name="Komiyama M."/>
            <person name="Tashiro H."/>
            <person name="Tanigami A."/>
            <person name="Fujiwara T."/>
            <person name="Ono T."/>
            <person name="Yamada K."/>
            <person name="Fujii Y."/>
            <person name="Ozaki K."/>
            <person name="Hirao M."/>
            <person name="Ohmori Y."/>
            <person name="Kawabata A."/>
            <person name="Hikiji T."/>
            <person name="Kobatake N."/>
            <person name="Inagaki H."/>
            <person name="Ikema Y."/>
            <person name="Okamoto S."/>
            <person name="Okitani R."/>
            <person name="Kawakami T."/>
            <person name="Noguchi S."/>
            <person name="Itoh T."/>
            <person name="Shigeta K."/>
            <person name="Senba T."/>
            <person name="Matsumura K."/>
            <person name="Nakajima Y."/>
            <person name="Mizuno T."/>
            <person name="Morinaga M."/>
            <person name="Sasaki M."/>
            <person name="Togashi T."/>
            <person name="Oyama M."/>
            <person name="Hata H."/>
            <person name="Watanabe M."/>
            <person name="Komatsu T."/>
            <person name="Mizushima-Sugano J."/>
            <person name="Satoh T."/>
            <person name="Shirai Y."/>
            <person name="Takahashi Y."/>
            <person name="Nakagawa K."/>
            <person name="Okumura K."/>
            <person name="Nagase T."/>
            <person name="Nomura N."/>
            <person name="Kikuchi H."/>
            <person name="Masuho Y."/>
            <person name="Yamashita R."/>
            <person name="Nakai K."/>
            <person name="Yada T."/>
            <person name="Nakamura Y."/>
            <person name="Ohara O."/>
            <person name="Isogai T."/>
            <person name="Sugano S."/>
        </authorList>
    </citation>
    <scope>NUCLEOTIDE SEQUENCE [LARGE SCALE MRNA] (ISOFORMS 1 AND 2)</scope>
    <source>
        <tissue>Spleen</tissue>
    </source>
</reference>
<reference key="6">
    <citation type="journal article" date="2005" name="Nature">
        <title>Generation and annotation of the DNA sequences of human chromosomes 2 and 4.</title>
        <authorList>
            <person name="Hillier L.W."/>
            <person name="Graves T.A."/>
            <person name="Fulton R.S."/>
            <person name="Fulton L.A."/>
            <person name="Pepin K.H."/>
            <person name="Minx P."/>
            <person name="Wagner-McPherson C."/>
            <person name="Layman D."/>
            <person name="Wylie K."/>
            <person name="Sekhon M."/>
            <person name="Becker M.C."/>
            <person name="Fewell G.A."/>
            <person name="Delehaunty K.D."/>
            <person name="Miner T.L."/>
            <person name="Nash W.E."/>
            <person name="Kremitzki C."/>
            <person name="Oddy L."/>
            <person name="Du H."/>
            <person name="Sun H."/>
            <person name="Bradshaw-Cordum H."/>
            <person name="Ali J."/>
            <person name="Carter J."/>
            <person name="Cordes M."/>
            <person name="Harris A."/>
            <person name="Isak A."/>
            <person name="van Brunt A."/>
            <person name="Nguyen C."/>
            <person name="Du F."/>
            <person name="Courtney L."/>
            <person name="Kalicki J."/>
            <person name="Ozersky P."/>
            <person name="Abbott S."/>
            <person name="Armstrong J."/>
            <person name="Belter E.A."/>
            <person name="Caruso L."/>
            <person name="Cedroni M."/>
            <person name="Cotton M."/>
            <person name="Davidson T."/>
            <person name="Desai A."/>
            <person name="Elliott G."/>
            <person name="Erb T."/>
            <person name="Fronick C."/>
            <person name="Gaige T."/>
            <person name="Haakenson W."/>
            <person name="Haglund K."/>
            <person name="Holmes A."/>
            <person name="Harkins R."/>
            <person name="Kim K."/>
            <person name="Kruchowski S.S."/>
            <person name="Strong C.M."/>
            <person name="Grewal N."/>
            <person name="Goyea E."/>
            <person name="Hou S."/>
            <person name="Levy A."/>
            <person name="Martinka S."/>
            <person name="Mead K."/>
            <person name="McLellan M.D."/>
            <person name="Meyer R."/>
            <person name="Randall-Maher J."/>
            <person name="Tomlinson C."/>
            <person name="Dauphin-Kohlberg S."/>
            <person name="Kozlowicz-Reilly A."/>
            <person name="Shah N."/>
            <person name="Swearengen-Shahid S."/>
            <person name="Snider J."/>
            <person name="Strong J.T."/>
            <person name="Thompson J."/>
            <person name="Yoakum M."/>
            <person name="Leonard S."/>
            <person name="Pearman C."/>
            <person name="Trani L."/>
            <person name="Radionenko M."/>
            <person name="Waligorski J.E."/>
            <person name="Wang C."/>
            <person name="Rock S.M."/>
            <person name="Tin-Wollam A.-M."/>
            <person name="Maupin R."/>
            <person name="Latreille P."/>
            <person name="Wendl M.C."/>
            <person name="Yang S.-P."/>
            <person name="Pohl C."/>
            <person name="Wallis J.W."/>
            <person name="Spieth J."/>
            <person name="Bieri T.A."/>
            <person name="Berkowicz N."/>
            <person name="Nelson J.O."/>
            <person name="Osborne J."/>
            <person name="Ding L."/>
            <person name="Meyer R."/>
            <person name="Sabo A."/>
            <person name="Shotland Y."/>
            <person name="Sinha P."/>
            <person name="Wohldmann P.E."/>
            <person name="Cook L.L."/>
            <person name="Hickenbotham M.T."/>
            <person name="Eldred J."/>
            <person name="Williams D."/>
            <person name="Jones T.A."/>
            <person name="She X."/>
            <person name="Ciccarelli F.D."/>
            <person name="Izaurralde E."/>
            <person name="Taylor J."/>
            <person name="Schmutz J."/>
            <person name="Myers R.M."/>
            <person name="Cox D.R."/>
            <person name="Huang X."/>
            <person name="McPherson J.D."/>
            <person name="Mardis E.R."/>
            <person name="Clifton S.W."/>
            <person name="Warren W.C."/>
            <person name="Chinwalla A.T."/>
            <person name="Eddy S.R."/>
            <person name="Marra M.A."/>
            <person name="Ovcharenko I."/>
            <person name="Furey T.S."/>
            <person name="Miller W."/>
            <person name="Eichler E.E."/>
            <person name="Bork P."/>
            <person name="Suyama M."/>
            <person name="Torrents D."/>
            <person name="Waterston R.H."/>
            <person name="Wilson R.K."/>
        </authorList>
    </citation>
    <scope>NUCLEOTIDE SEQUENCE [LARGE SCALE GENOMIC DNA]</scope>
</reference>
<reference key="7">
    <citation type="submission" date="2005-07" db="EMBL/GenBank/DDBJ databases">
        <authorList>
            <person name="Mural R.J."/>
            <person name="Istrail S."/>
            <person name="Sutton G.G."/>
            <person name="Florea L."/>
            <person name="Halpern A.L."/>
            <person name="Mobarry C.M."/>
            <person name="Lippert R."/>
            <person name="Walenz B."/>
            <person name="Shatkay H."/>
            <person name="Dew I."/>
            <person name="Miller J.R."/>
            <person name="Flanigan M.J."/>
            <person name="Edwards N.J."/>
            <person name="Bolanos R."/>
            <person name="Fasulo D."/>
            <person name="Halldorsson B.V."/>
            <person name="Hannenhalli S."/>
            <person name="Turner R."/>
            <person name="Yooseph S."/>
            <person name="Lu F."/>
            <person name="Nusskern D.R."/>
            <person name="Shue B.C."/>
            <person name="Zheng X.H."/>
            <person name="Zhong F."/>
            <person name="Delcher A.L."/>
            <person name="Huson D.H."/>
            <person name="Kravitz S.A."/>
            <person name="Mouchard L."/>
            <person name="Reinert K."/>
            <person name="Remington K.A."/>
            <person name="Clark A.G."/>
            <person name="Waterman M.S."/>
            <person name="Eichler E.E."/>
            <person name="Adams M.D."/>
            <person name="Hunkapiller M.W."/>
            <person name="Myers E.W."/>
            <person name="Venter J.C."/>
        </authorList>
    </citation>
    <scope>NUCLEOTIDE SEQUENCE [LARGE SCALE GENOMIC DNA]</scope>
</reference>
<reference key="8">
    <citation type="journal article" date="2004" name="Genome Res.">
        <title>The status, quality, and expansion of the NIH full-length cDNA project: the Mammalian Gene Collection (MGC).</title>
        <authorList>
            <consortium name="The MGC Project Team"/>
        </authorList>
    </citation>
    <scope>NUCLEOTIDE SEQUENCE [LARGE SCALE MRNA] (ISOFORM 1)</scope>
    <source>
        <tissue>Kidney</tissue>
        <tissue>Muscle</tissue>
    </source>
</reference>
<reference key="9">
    <citation type="journal article" date="1998" name="Biochem. Biophys. Res. Commun.">
        <title>Expression of a novel isoform of cyclin I in human testis.</title>
        <authorList>
            <person name="Zhu X."/>
            <person name="Naz R.K."/>
        </authorList>
    </citation>
    <scope>NUCLEOTIDE SEQUENCE [MRNA] OF 1-178 (ISOFORM 1)</scope>
    <source>
        <tissue>Testis</tissue>
    </source>
</reference>
<reference key="10">
    <citation type="journal article" date="2017" name="Sci. Rep.">
        <title>A systematic analysis of orphan cyclins reveals CNTD2 as a new oncogenic driver in lung cancer.</title>
        <authorList>
            <person name="Gasa L."/>
            <person name="Sanchez-Botet A."/>
            <person name="Quandt E."/>
            <person name="Hernandez-Ortega S."/>
            <person name="Jimenez J."/>
            <person name="Carrasco-Garcia M.A."/>
            <person name="Simonetti S."/>
            <person name="Kron S.J."/>
            <person name="Ribeiro M.P."/>
            <person name="Nadal E."/>
            <person name="Villanueva A."/>
            <person name="Clotet J."/>
        </authorList>
    </citation>
    <scope>SUBCELLULAR LOCATION</scope>
</reference>
<accession>Q14094</accession>
<accession>B2R6M0</accession>
<accession>B7Z6X4</accession>
<feature type="chain" id="PRO_0000080476" description="Cyclin-I">
    <location>
        <begin position="1"/>
        <end position="377"/>
    </location>
</feature>
<feature type="region of interest" description="Disordered" evidence="1">
    <location>
        <begin position="357"/>
        <end position="377"/>
    </location>
</feature>
<feature type="compositionally biased region" description="Pro residues" evidence="1">
    <location>
        <begin position="367"/>
        <end position="377"/>
    </location>
</feature>
<feature type="splice variant" id="VSP_056682" description="In isoform 2." evidence="5">
    <original>MKFPGPLENQRLSFLLEKAITREAQMWKVNVRKMPSNQ</original>
    <variation>MTPRHHCEAYSSAGEEEEEEEEEK</variation>
    <location>
        <begin position="1"/>
        <end position="38"/>
    </location>
</feature>
<feature type="sequence variant" id="VAR_016312" description="In dbSNP:rs4252903." evidence="4">
    <original>V</original>
    <variation>I</variation>
    <location>
        <position position="207"/>
    </location>
</feature>
<feature type="sequence conflict" description="In Ref. 9; no nucleotide entry." evidence="6" ref="9">
    <original>N</original>
    <variation>D</variation>
    <location>
        <position position="9"/>
    </location>
</feature>
<feature type="sequence conflict" description="In Ref. 9; no nucleotide entry." evidence="6" ref="9">
    <original>Q</original>
    <variation>R</variation>
    <location>
        <position position="58"/>
    </location>
</feature>
<feature type="sequence conflict" description="In Ref. 9; no nucleotide entry." evidence="6" ref="9">
    <original>R</original>
    <variation>G</variation>
    <location>
        <position position="75"/>
    </location>
</feature>
<name>CCNI_HUMAN</name>
<evidence type="ECO:0000256" key="1">
    <source>
        <dbReference type="SAM" id="MobiDB-lite"/>
    </source>
</evidence>
<evidence type="ECO:0000269" key="2">
    <source>
    </source>
</evidence>
<evidence type="ECO:0000269" key="3">
    <source>
    </source>
</evidence>
<evidence type="ECO:0000269" key="4">
    <source ref="4"/>
</evidence>
<evidence type="ECO:0000303" key="5">
    <source>
    </source>
</evidence>
<evidence type="ECO:0000305" key="6"/>
<evidence type="ECO:0000312" key="7">
    <source>
        <dbReference type="HGNC" id="HGNC:1595"/>
    </source>
</evidence>
<organism>
    <name type="scientific">Homo sapiens</name>
    <name type="common">Human</name>
    <dbReference type="NCBI Taxonomy" id="9606"/>
    <lineage>
        <taxon>Eukaryota</taxon>
        <taxon>Metazoa</taxon>
        <taxon>Chordata</taxon>
        <taxon>Craniata</taxon>
        <taxon>Vertebrata</taxon>
        <taxon>Euteleostomi</taxon>
        <taxon>Mammalia</taxon>
        <taxon>Eutheria</taxon>
        <taxon>Euarchontoglires</taxon>
        <taxon>Primates</taxon>
        <taxon>Haplorrhini</taxon>
        <taxon>Catarrhini</taxon>
        <taxon>Hominidae</taxon>
        <taxon>Homo</taxon>
    </lineage>
</organism>
<keyword id="KW-0025">Alternative splicing</keyword>
<keyword id="KW-0195">Cyclin</keyword>
<keyword id="KW-0472">Membrane</keyword>
<keyword id="KW-0539">Nucleus</keyword>
<keyword id="KW-1267">Proteomics identification</keyword>
<keyword id="KW-1185">Reference proteome</keyword>
<gene>
    <name evidence="7" type="primary">CCNI</name>
</gene>
<dbReference type="EMBL" id="D50310">
    <property type="protein sequence ID" value="BAA08849.1"/>
    <property type="molecule type" value="mRNA"/>
</dbReference>
<dbReference type="EMBL" id="AF135162">
    <property type="protein sequence ID" value="AAF43786.1"/>
    <property type="molecule type" value="mRNA"/>
</dbReference>
<dbReference type="EMBL" id="BT020019">
    <property type="protein sequence ID" value="AAV38822.1"/>
    <property type="molecule type" value="mRNA"/>
</dbReference>
<dbReference type="EMBL" id="AY207372">
    <property type="protein sequence ID" value="AAO13492.1"/>
    <property type="molecule type" value="Genomic_DNA"/>
</dbReference>
<dbReference type="EMBL" id="AK301111">
    <property type="protein sequence ID" value="BAH13410.1"/>
    <property type="molecule type" value="mRNA"/>
</dbReference>
<dbReference type="EMBL" id="AK312632">
    <property type="protein sequence ID" value="BAG35517.1"/>
    <property type="molecule type" value="mRNA"/>
</dbReference>
<dbReference type="EMBL" id="AC104771">
    <property type="status" value="NOT_ANNOTATED_CDS"/>
    <property type="molecule type" value="Genomic_DNA"/>
</dbReference>
<dbReference type="EMBL" id="AC111196">
    <property type="status" value="NOT_ANNOTATED_CDS"/>
    <property type="molecule type" value="Genomic_DNA"/>
</dbReference>
<dbReference type="EMBL" id="CH471057">
    <property type="protein sequence ID" value="EAX05808.1"/>
    <property type="molecule type" value="Genomic_DNA"/>
</dbReference>
<dbReference type="EMBL" id="BC000420">
    <property type="protein sequence ID" value="AAH00420.1"/>
    <property type="molecule type" value="mRNA"/>
</dbReference>
<dbReference type="EMBL" id="BC004975">
    <property type="protein sequence ID" value="AAH04975.1"/>
    <property type="molecule type" value="mRNA"/>
</dbReference>
<dbReference type="CCDS" id="CCDS3580.1">
    <molecule id="Q14094-1"/>
</dbReference>
<dbReference type="PIR" id="JE0264">
    <property type="entry name" value="JE0264"/>
</dbReference>
<dbReference type="RefSeq" id="NP_001335061.1">
    <molecule id="Q14094-1"/>
    <property type="nucleotide sequence ID" value="NM_001348132.2"/>
</dbReference>
<dbReference type="RefSeq" id="NP_001335062.1">
    <molecule id="Q14094-1"/>
    <property type="nucleotide sequence ID" value="NM_001348133.2"/>
</dbReference>
<dbReference type="RefSeq" id="NP_001335063.1">
    <molecule id="Q14094-2"/>
    <property type="nucleotide sequence ID" value="NM_001348134.2"/>
</dbReference>
<dbReference type="RefSeq" id="NP_006826.1">
    <molecule id="Q14094-1"/>
    <property type="nucleotide sequence ID" value="NM_006835.3"/>
</dbReference>
<dbReference type="SMR" id="Q14094"/>
<dbReference type="BioGRID" id="116179">
    <property type="interactions" value="19"/>
</dbReference>
<dbReference type="FunCoup" id="Q14094">
    <property type="interactions" value="2285"/>
</dbReference>
<dbReference type="IntAct" id="Q14094">
    <property type="interactions" value="11"/>
</dbReference>
<dbReference type="MINT" id="Q14094"/>
<dbReference type="STRING" id="9606.ENSP00000237654"/>
<dbReference type="iPTMnet" id="Q14094"/>
<dbReference type="PhosphoSitePlus" id="Q14094"/>
<dbReference type="BioMuta" id="CCNI"/>
<dbReference type="DMDM" id="9296954"/>
<dbReference type="jPOST" id="Q14094"/>
<dbReference type="MassIVE" id="Q14094"/>
<dbReference type="PaxDb" id="9606-ENSP00000237654"/>
<dbReference type="PeptideAtlas" id="Q14094"/>
<dbReference type="ProteomicsDB" id="59809">
    <molecule id="Q14094-1"/>
</dbReference>
<dbReference type="ProteomicsDB" id="6814"/>
<dbReference type="Antibodypedia" id="4127">
    <property type="antibodies" value="169 antibodies from 27 providers"/>
</dbReference>
<dbReference type="DNASU" id="10983"/>
<dbReference type="Ensembl" id="ENST00000237654.9">
    <molecule id="Q14094-1"/>
    <property type="protein sequence ID" value="ENSP00000237654.4"/>
    <property type="gene ID" value="ENSG00000118816.12"/>
</dbReference>
<dbReference type="Ensembl" id="ENST00000507788.3">
    <molecule id="Q14094-2"/>
    <property type="protein sequence ID" value="ENSP00000421594.2"/>
    <property type="gene ID" value="ENSG00000118816.12"/>
</dbReference>
<dbReference type="Ensembl" id="ENST00000718433.1">
    <molecule id="Q14094-1"/>
    <property type="protein sequence ID" value="ENSP00000520818.1"/>
    <property type="gene ID" value="ENSG00000118816.12"/>
</dbReference>
<dbReference type="GeneID" id="10983"/>
<dbReference type="KEGG" id="hsa:10983"/>
<dbReference type="MANE-Select" id="ENST00000237654.9">
    <property type="protein sequence ID" value="ENSP00000237654.4"/>
    <property type="RefSeq nucleotide sequence ID" value="NM_006835.3"/>
    <property type="RefSeq protein sequence ID" value="NP_006826.1"/>
</dbReference>
<dbReference type="UCSC" id="uc003hkm.5">
    <molecule id="Q14094-1"/>
    <property type="organism name" value="human"/>
</dbReference>
<dbReference type="AGR" id="HGNC:1595"/>
<dbReference type="CTD" id="10983"/>
<dbReference type="DisGeNET" id="10983"/>
<dbReference type="GeneCards" id="CCNI"/>
<dbReference type="HGNC" id="HGNC:1595">
    <property type="gene designation" value="CCNI"/>
</dbReference>
<dbReference type="HPA" id="ENSG00000118816">
    <property type="expression patterns" value="Low tissue specificity"/>
</dbReference>
<dbReference type="MIM" id="618783">
    <property type="type" value="gene"/>
</dbReference>
<dbReference type="neXtProt" id="NX_Q14094"/>
<dbReference type="OpenTargets" id="ENSG00000118816"/>
<dbReference type="PharmGKB" id="PA26160"/>
<dbReference type="VEuPathDB" id="HostDB:ENSG00000118816"/>
<dbReference type="eggNOG" id="KOG0653">
    <property type="taxonomic scope" value="Eukaryota"/>
</dbReference>
<dbReference type="GeneTree" id="ENSGT00940000154827"/>
<dbReference type="HOGENOM" id="CLU_062642_1_0_1"/>
<dbReference type="InParanoid" id="Q14094"/>
<dbReference type="OMA" id="TGCKHAS"/>
<dbReference type="OrthoDB" id="769138at2759"/>
<dbReference type="PAN-GO" id="Q14094">
    <property type="GO annotations" value="6 GO annotations based on evolutionary models"/>
</dbReference>
<dbReference type="PhylomeDB" id="Q14094"/>
<dbReference type="TreeFam" id="TF101007"/>
<dbReference type="PathwayCommons" id="Q14094"/>
<dbReference type="SignaLink" id="Q14094"/>
<dbReference type="BioGRID-ORCS" id="10983">
    <property type="hits" value="15 hits in 1154 CRISPR screens"/>
</dbReference>
<dbReference type="ChiTaRS" id="CCNI">
    <property type="organism name" value="human"/>
</dbReference>
<dbReference type="GeneWiki" id="CCNI_(gene)"/>
<dbReference type="GenomeRNAi" id="10983"/>
<dbReference type="Pharos" id="Q14094">
    <property type="development level" value="Tbio"/>
</dbReference>
<dbReference type="PRO" id="PR:Q14094"/>
<dbReference type="Proteomes" id="UP000005640">
    <property type="component" value="Chromosome 4"/>
</dbReference>
<dbReference type="RNAct" id="Q14094">
    <property type="molecule type" value="protein"/>
</dbReference>
<dbReference type="Bgee" id="ENSG00000118816">
    <property type="expression patterns" value="Expressed in paraflocculus and 217 other cell types or tissues"/>
</dbReference>
<dbReference type="ExpressionAtlas" id="Q14094">
    <property type="expression patterns" value="baseline and differential"/>
</dbReference>
<dbReference type="GO" id="GO:0000307">
    <property type="term" value="C:cyclin-dependent protein kinase holoenzyme complex"/>
    <property type="evidence" value="ECO:0000318"/>
    <property type="project" value="GO_Central"/>
</dbReference>
<dbReference type="GO" id="GO:0005737">
    <property type="term" value="C:cytoplasm"/>
    <property type="evidence" value="ECO:0000318"/>
    <property type="project" value="GO_Central"/>
</dbReference>
<dbReference type="GO" id="GO:0031965">
    <property type="term" value="C:nuclear membrane"/>
    <property type="evidence" value="ECO:0007669"/>
    <property type="project" value="UniProtKB-SubCell"/>
</dbReference>
<dbReference type="GO" id="GO:0005634">
    <property type="term" value="C:nucleus"/>
    <property type="evidence" value="ECO:0000318"/>
    <property type="project" value="GO_Central"/>
</dbReference>
<dbReference type="GO" id="GO:0016538">
    <property type="term" value="F:cyclin-dependent protein serine/threonine kinase regulator activity"/>
    <property type="evidence" value="ECO:0000318"/>
    <property type="project" value="GO_Central"/>
</dbReference>
<dbReference type="GO" id="GO:0000082">
    <property type="term" value="P:G1/S transition of mitotic cell cycle"/>
    <property type="evidence" value="ECO:0000318"/>
    <property type="project" value="GO_Central"/>
</dbReference>
<dbReference type="GO" id="GO:0007283">
    <property type="term" value="P:spermatogenesis"/>
    <property type="evidence" value="ECO:0000303"/>
    <property type="project" value="UniProtKB"/>
</dbReference>
<dbReference type="CDD" id="cd20526">
    <property type="entry name" value="CYCLIN_CCNI-like"/>
    <property type="match status" value="1"/>
</dbReference>
<dbReference type="FunFam" id="1.10.472.10:FF:000006">
    <property type="entry name" value="Cyclin I"/>
    <property type="match status" value="1"/>
</dbReference>
<dbReference type="FunFam" id="1.10.472.10:FF:000052">
    <property type="entry name" value="cyclin-I isoform X1"/>
    <property type="match status" value="1"/>
</dbReference>
<dbReference type="Gene3D" id="1.10.472.10">
    <property type="entry name" value="Cyclin-like"/>
    <property type="match status" value="2"/>
</dbReference>
<dbReference type="InterPro" id="IPR039361">
    <property type="entry name" value="Cyclin"/>
</dbReference>
<dbReference type="InterPro" id="IPR013763">
    <property type="entry name" value="Cyclin-like_dom"/>
</dbReference>
<dbReference type="InterPro" id="IPR036915">
    <property type="entry name" value="Cyclin-like_sf"/>
</dbReference>
<dbReference type="InterPro" id="IPR006671">
    <property type="entry name" value="Cyclin_N"/>
</dbReference>
<dbReference type="PANTHER" id="PTHR10177">
    <property type="entry name" value="CYCLINS"/>
    <property type="match status" value="1"/>
</dbReference>
<dbReference type="Pfam" id="PF00134">
    <property type="entry name" value="Cyclin_N"/>
    <property type="match status" value="1"/>
</dbReference>
<dbReference type="SMART" id="SM00385">
    <property type="entry name" value="CYCLIN"/>
    <property type="match status" value="1"/>
</dbReference>
<dbReference type="SUPFAM" id="SSF47954">
    <property type="entry name" value="Cyclin-like"/>
    <property type="match status" value="1"/>
</dbReference>